<keyword id="KW-0002">3D-structure</keyword>
<keyword id="KW-0067">ATP-binding</keyword>
<keyword id="KW-0418">Kinase</keyword>
<keyword id="KW-0460">Magnesium</keyword>
<keyword id="KW-0479">Metal-binding</keyword>
<keyword id="KW-0546">Nucleotide metabolism</keyword>
<keyword id="KW-0547">Nucleotide-binding</keyword>
<keyword id="KW-1185">Reference proteome</keyword>
<keyword id="KW-0808">Transferase</keyword>
<sequence length="147" mass="16660">MERTFIMIKPDAIKRRLISRIIQRFEEKGLYLAASKCVIPKREVLETHYSHLSSMPFFSEMVEDMMSGMVLAMVWVGKDAVSIGRKLIGETNPQAASVGTIRGDYGVSTGKNIIHGSDCVENAEKEIKLWIGDDVQPVSFFDKEWIY</sequence>
<name>NDK_ENCCU</name>
<reference key="1">
    <citation type="journal article" date="2001" name="Nature">
        <title>Genome sequence and gene compaction of the eukaryote parasite Encephalitozoon cuniculi.</title>
        <authorList>
            <person name="Katinka M.D."/>
            <person name="Duprat S."/>
            <person name="Cornillot E."/>
            <person name="Metenier G."/>
            <person name="Thomarat F."/>
            <person name="Prensier G."/>
            <person name="Barbe V."/>
            <person name="Peyretaillade E."/>
            <person name="Brottier P."/>
            <person name="Wincker P."/>
            <person name="Delbac F."/>
            <person name="El Alaoui H."/>
            <person name="Peyret P."/>
            <person name="Saurin W."/>
            <person name="Gouy M."/>
            <person name="Weissenbach J."/>
            <person name="Vivares C.P."/>
        </authorList>
    </citation>
    <scope>NUCLEOTIDE SEQUENCE [LARGE SCALE GENOMIC DNA]</scope>
    <source>
        <strain>GB-M1</strain>
    </source>
</reference>
<reference key="2">
    <citation type="journal article" date="2006" name="Proteomics">
        <title>Proteomic analysis of the eukaryotic parasite Encephalitozoon cuniculi (microsporidia): a reference map for proteins expressed in late sporogonial stages.</title>
        <authorList>
            <person name="Brosson D."/>
            <person name="Kuhn L."/>
            <person name="Delbac F."/>
            <person name="Garin J."/>
            <person name="Vivares C.P."/>
            <person name="Texier C."/>
        </authorList>
    </citation>
    <scope>IDENTIFICATION BY MASS SPECTROMETRY [LARGE SCALE ANALYSIS]</scope>
    <scope>DEVELOPMENTAL STAGE</scope>
</reference>
<feature type="chain" id="PRO_0000379474" description="Nucleoside diphosphate kinase">
    <location>
        <begin position="1"/>
        <end position="147"/>
    </location>
</feature>
<feature type="active site" description="Pros-phosphohistidine intermediate" evidence="1">
    <location>
        <position position="115"/>
    </location>
</feature>
<feature type="binding site" evidence="1">
    <location>
        <position position="9"/>
    </location>
    <ligand>
        <name>ATP</name>
        <dbReference type="ChEBI" id="CHEBI:30616"/>
    </ligand>
</feature>
<feature type="binding site" evidence="1">
    <location>
        <position position="85"/>
    </location>
    <ligand>
        <name>ATP</name>
        <dbReference type="ChEBI" id="CHEBI:30616"/>
    </ligand>
</feature>
<feature type="binding site" evidence="1">
    <location>
        <position position="91"/>
    </location>
    <ligand>
        <name>ATP</name>
        <dbReference type="ChEBI" id="CHEBI:30616"/>
    </ligand>
</feature>
<feature type="binding site" evidence="1">
    <location>
        <position position="102"/>
    </location>
    <ligand>
        <name>ATP</name>
        <dbReference type="ChEBI" id="CHEBI:30616"/>
    </ligand>
</feature>
<feature type="binding site" evidence="1">
    <location>
        <position position="112"/>
    </location>
    <ligand>
        <name>ATP</name>
        <dbReference type="ChEBI" id="CHEBI:30616"/>
    </ligand>
</feature>
<feature type="strand" evidence="4">
    <location>
        <begin position="3"/>
        <end position="8"/>
    </location>
</feature>
<feature type="helix" evidence="4">
    <location>
        <begin position="10"/>
        <end position="14"/>
    </location>
</feature>
<feature type="helix" evidence="4">
    <location>
        <begin position="18"/>
        <end position="28"/>
    </location>
</feature>
<feature type="strand" evidence="4">
    <location>
        <begin position="31"/>
        <end position="38"/>
    </location>
</feature>
<feature type="helix" evidence="4">
    <location>
        <begin position="42"/>
        <end position="48"/>
    </location>
</feature>
<feature type="helix" evidence="4">
    <location>
        <begin position="50"/>
        <end position="52"/>
    </location>
</feature>
<feature type="helix" evidence="4">
    <location>
        <begin position="58"/>
        <end position="65"/>
    </location>
</feature>
<feature type="strand" evidence="4">
    <location>
        <begin position="70"/>
        <end position="77"/>
    </location>
</feature>
<feature type="helix" evidence="4">
    <location>
        <begin position="80"/>
        <end position="88"/>
    </location>
</feature>
<feature type="turn" evidence="4">
    <location>
        <begin position="93"/>
        <end position="95"/>
    </location>
</feature>
<feature type="helix" evidence="4">
    <location>
        <begin position="101"/>
        <end position="105"/>
    </location>
</feature>
<feature type="strand" evidence="4">
    <location>
        <begin position="113"/>
        <end position="116"/>
    </location>
</feature>
<feature type="helix" evidence="4">
    <location>
        <begin position="120"/>
        <end position="130"/>
    </location>
</feature>
<feature type="helix" evidence="4">
    <location>
        <begin position="143"/>
        <end position="146"/>
    </location>
</feature>
<accession>Q8SRM7</accession>
<organism>
    <name type="scientific">Encephalitozoon cuniculi (strain GB-M1)</name>
    <name type="common">Microsporidian parasite</name>
    <dbReference type="NCBI Taxonomy" id="284813"/>
    <lineage>
        <taxon>Eukaryota</taxon>
        <taxon>Fungi</taxon>
        <taxon>Fungi incertae sedis</taxon>
        <taxon>Microsporidia</taxon>
        <taxon>Unikaryonidae</taxon>
        <taxon>Encephalitozoon</taxon>
    </lineage>
</organism>
<dbReference type="EC" id="2.7.4.6"/>
<dbReference type="EMBL" id="AL590446">
    <property type="protein sequence ID" value="CAD25514.1"/>
    <property type="molecule type" value="Genomic_DNA"/>
</dbReference>
<dbReference type="RefSeq" id="NP_585910.1">
    <property type="nucleotide sequence ID" value="NM_001041532.1"/>
</dbReference>
<dbReference type="PDB" id="3MPD">
    <property type="method" value="X-ray"/>
    <property type="resolution" value="2.08 A"/>
    <property type="chains" value="A/B=1-147"/>
</dbReference>
<dbReference type="PDBsum" id="3MPD"/>
<dbReference type="SMR" id="Q8SRM7"/>
<dbReference type="FunCoup" id="Q8SRM7">
    <property type="interactions" value="160"/>
</dbReference>
<dbReference type="STRING" id="284813.Q8SRM7"/>
<dbReference type="GeneID" id="859337"/>
<dbReference type="KEGG" id="ecu:ECU06_1530"/>
<dbReference type="VEuPathDB" id="MicrosporidiaDB:ECU06_1530"/>
<dbReference type="HOGENOM" id="CLU_060216_6_3_1"/>
<dbReference type="InParanoid" id="Q8SRM7"/>
<dbReference type="OMA" id="NIWFKAD"/>
<dbReference type="OrthoDB" id="2162449at2759"/>
<dbReference type="EvolutionaryTrace" id="Q8SRM7"/>
<dbReference type="Proteomes" id="UP000000819">
    <property type="component" value="Chromosome VI"/>
</dbReference>
<dbReference type="GO" id="GO:0005524">
    <property type="term" value="F:ATP binding"/>
    <property type="evidence" value="ECO:0007669"/>
    <property type="project" value="UniProtKB-KW"/>
</dbReference>
<dbReference type="GO" id="GO:0046872">
    <property type="term" value="F:metal ion binding"/>
    <property type="evidence" value="ECO:0007669"/>
    <property type="project" value="UniProtKB-KW"/>
</dbReference>
<dbReference type="GO" id="GO:0004550">
    <property type="term" value="F:nucleoside diphosphate kinase activity"/>
    <property type="evidence" value="ECO:0007669"/>
    <property type="project" value="UniProtKB-EC"/>
</dbReference>
<dbReference type="GO" id="GO:0006241">
    <property type="term" value="P:CTP biosynthetic process"/>
    <property type="evidence" value="ECO:0007669"/>
    <property type="project" value="InterPro"/>
</dbReference>
<dbReference type="GO" id="GO:0006183">
    <property type="term" value="P:GTP biosynthetic process"/>
    <property type="evidence" value="ECO:0007669"/>
    <property type="project" value="InterPro"/>
</dbReference>
<dbReference type="GO" id="GO:0006228">
    <property type="term" value="P:UTP biosynthetic process"/>
    <property type="evidence" value="ECO:0007669"/>
    <property type="project" value="InterPro"/>
</dbReference>
<dbReference type="CDD" id="cd04413">
    <property type="entry name" value="NDPk_I"/>
    <property type="match status" value="1"/>
</dbReference>
<dbReference type="FunFam" id="3.30.70.141:FF:000002">
    <property type="entry name" value="Nucleoside diphosphate kinase"/>
    <property type="match status" value="1"/>
</dbReference>
<dbReference type="Gene3D" id="3.30.70.141">
    <property type="entry name" value="Nucleoside diphosphate kinase-like domain"/>
    <property type="match status" value="1"/>
</dbReference>
<dbReference type="InterPro" id="IPR034907">
    <property type="entry name" value="NDK-like_dom"/>
</dbReference>
<dbReference type="InterPro" id="IPR036850">
    <property type="entry name" value="NDK-like_dom_sf"/>
</dbReference>
<dbReference type="InterPro" id="IPR001564">
    <property type="entry name" value="Nucleoside_diP_kinase"/>
</dbReference>
<dbReference type="NCBIfam" id="NF001908">
    <property type="entry name" value="PRK00668.1"/>
    <property type="match status" value="1"/>
</dbReference>
<dbReference type="PANTHER" id="PTHR11349">
    <property type="entry name" value="NUCLEOSIDE DIPHOSPHATE KINASE"/>
    <property type="match status" value="1"/>
</dbReference>
<dbReference type="Pfam" id="PF00334">
    <property type="entry name" value="NDK"/>
    <property type="match status" value="1"/>
</dbReference>
<dbReference type="PRINTS" id="PR01243">
    <property type="entry name" value="NUCDPKINASE"/>
</dbReference>
<dbReference type="SMART" id="SM00562">
    <property type="entry name" value="NDK"/>
    <property type="match status" value="1"/>
</dbReference>
<dbReference type="SUPFAM" id="SSF54919">
    <property type="entry name" value="Nucleoside diphosphate kinase, NDK"/>
    <property type="match status" value="1"/>
</dbReference>
<dbReference type="PROSITE" id="PS51374">
    <property type="entry name" value="NDPK_LIKE"/>
    <property type="match status" value="1"/>
</dbReference>
<proteinExistence type="evidence at protein level"/>
<gene>
    <name type="primary">NDK1</name>
    <name type="ordered locus">ECU06_1530</name>
</gene>
<comment type="function">
    <text evidence="1">Major role in the synthesis of nucleoside triphosphates other than ATP. The ATP gamma phosphate is transferred to the NDP beta phosphate via a ping-pong mechanism, using a phosphorylated active-site intermediate (By similarity).</text>
</comment>
<comment type="catalytic activity">
    <reaction>
        <text>a 2'-deoxyribonucleoside 5'-diphosphate + ATP = a 2'-deoxyribonucleoside 5'-triphosphate + ADP</text>
        <dbReference type="Rhea" id="RHEA:44640"/>
        <dbReference type="ChEBI" id="CHEBI:30616"/>
        <dbReference type="ChEBI" id="CHEBI:61560"/>
        <dbReference type="ChEBI" id="CHEBI:73316"/>
        <dbReference type="ChEBI" id="CHEBI:456216"/>
        <dbReference type="EC" id="2.7.4.6"/>
    </reaction>
</comment>
<comment type="catalytic activity">
    <reaction>
        <text>a ribonucleoside 5'-diphosphate + ATP = a ribonucleoside 5'-triphosphate + ADP</text>
        <dbReference type="Rhea" id="RHEA:18113"/>
        <dbReference type="ChEBI" id="CHEBI:30616"/>
        <dbReference type="ChEBI" id="CHEBI:57930"/>
        <dbReference type="ChEBI" id="CHEBI:61557"/>
        <dbReference type="ChEBI" id="CHEBI:456216"/>
        <dbReference type="EC" id="2.7.4.6"/>
    </reaction>
</comment>
<comment type="cofactor">
    <cofactor evidence="1">
        <name>Mg(2+)</name>
        <dbReference type="ChEBI" id="CHEBI:18420"/>
    </cofactor>
</comment>
<comment type="developmental stage">
    <text evidence="2">Expressed in late sporogonial stages.</text>
</comment>
<comment type="similarity">
    <text evidence="3">Belongs to the NDK family.</text>
</comment>
<protein>
    <recommendedName>
        <fullName>Nucleoside diphosphate kinase</fullName>
        <shortName>NDK</shortName>
        <shortName>NDP kinase</shortName>
        <shortName>NDPK</shortName>
        <ecNumber>2.7.4.6</ecNumber>
    </recommendedName>
</protein>
<evidence type="ECO:0000250" key="1"/>
<evidence type="ECO:0000269" key="2">
    <source>
    </source>
</evidence>
<evidence type="ECO:0000305" key="3"/>
<evidence type="ECO:0007829" key="4">
    <source>
        <dbReference type="PDB" id="3MPD"/>
    </source>
</evidence>